<sequence length="46" mass="5442">MQIVEAIYEDGVLKLLKNLKLKEHSKVIIKVIDEEEIEKILDSRDY</sequence>
<protein>
    <recommendedName>
        <fullName>Putative antitoxin VapB3</fullName>
    </recommendedName>
</protein>
<reference key="1">
    <citation type="journal article" date="1999" name="Genetics">
        <title>Divergence of the hyperthermophilic archaea Pyrococcus furiosus and P. horikoshii inferred from complete genomic sequences.</title>
        <authorList>
            <person name="Maeder D.L."/>
            <person name="Weiss R.B."/>
            <person name="Dunn D.M."/>
            <person name="Cherry J.L."/>
            <person name="Gonzalez J.M."/>
            <person name="DiRuggiero J."/>
            <person name="Robb F.T."/>
        </authorList>
    </citation>
    <scope>NUCLEOTIDE SEQUENCE [LARGE SCALE GENOMIC DNA]</scope>
    <source>
        <strain>ATCC 43587 / DSM 3638 / JCM 8422 / Vc1</strain>
    </source>
</reference>
<reference key="2">
    <citation type="journal article" date="2005" name="Nucleic Acids Res.">
        <title>Toxin-antitoxin loci are highly abundant in free-living but lost from host-associated prokaryotes.</title>
        <authorList>
            <person name="Pandey D.P."/>
            <person name="Gerdes K."/>
        </authorList>
    </citation>
    <scope>POSSIBLE FUNCTION</scope>
    <source>
        <strain>ATCC 43587 / DSM 3638 / JCM 8422 / Vc1</strain>
    </source>
</reference>
<feature type="chain" id="PRO_0000156862" description="Putative antitoxin VapB3">
    <location>
        <begin position="1"/>
        <end position="46"/>
    </location>
</feature>
<accession>Q8U394</accession>
<organism>
    <name type="scientific">Pyrococcus furiosus (strain ATCC 43587 / DSM 3638 / JCM 8422 / Vc1)</name>
    <dbReference type="NCBI Taxonomy" id="186497"/>
    <lineage>
        <taxon>Archaea</taxon>
        <taxon>Methanobacteriati</taxon>
        <taxon>Methanobacteriota</taxon>
        <taxon>Thermococci</taxon>
        <taxon>Thermococcales</taxon>
        <taxon>Thermococcaceae</taxon>
        <taxon>Pyrococcus</taxon>
    </lineage>
</organism>
<dbReference type="EMBL" id="AE009950">
    <property type="protein sequence ID" value="AAL80700.1"/>
    <property type="molecule type" value="Genomic_DNA"/>
</dbReference>
<dbReference type="SMR" id="Q8U394"/>
<dbReference type="STRING" id="186497.PF0576"/>
<dbReference type="PaxDb" id="186497-PF0576"/>
<dbReference type="KEGG" id="pfu:PF0576"/>
<dbReference type="PATRIC" id="fig|186497.12.peg.604"/>
<dbReference type="eggNOG" id="arCOG07152">
    <property type="taxonomic scope" value="Archaea"/>
</dbReference>
<dbReference type="HOGENOM" id="CLU_3178717_0_0_2"/>
<dbReference type="Proteomes" id="UP000001013">
    <property type="component" value="Chromosome"/>
</dbReference>
<dbReference type="Gene3D" id="4.10.1150.10">
    <property type="entry name" value="AF2212/PG0164-like"/>
    <property type="match status" value="1"/>
</dbReference>
<dbReference type="InterPro" id="IPR008203">
    <property type="entry name" value="AF2212-like"/>
</dbReference>
<dbReference type="InterPro" id="IPR024069">
    <property type="entry name" value="AF2212-like_dom_sf"/>
</dbReference>
<dbReference type="Pfam" id="PF01954">
    <property type="entry name" value="AF2212-like"/>
    <property type="match status" value="1"/>
</dbReference>
<dbReference type="SUPFAM" id="SSF141694">
    <property type="entry name" value="AF2212/PG0164-like"/>
    <property type="match status" value="1"/>
</dbReference>
<keyword id="KW-1185">Reference proteome</keyword>
<keyword id="KW-1277">Toxin-antitoxin system</keyword>
<evidence type="ECO:0000305" key="1"/>
<comment type="function">
    <text evidence="1">Possibly the antitoxin component of a type II toxin-antitoxin (TA) system. Its cognate toxin is VapC3 (Potential).</text>
</comment>
<comment type="similarity">
    <text evidence="1">Belongs to the UPF0165 family.</text>
</comment>
<proteinExistence type="inferred from homology"/>
<gene>
    <name type="primary">vapB3</name>
    <name type="ordered locus">PF0576</name>
</gene>
<name>VAPB3_PYRFU</name>